<protein>
    <recommendedName>
        <fullName evidence="1">Ribosome rescue factor SmrB</fullName>
        <ecNumber evidence="1">3.1.-.-</ecNumber>
    </recommendedName>
</protein>
<keyword id="KW-0255">Endonuclease</keyword>
<keyword id="KW-0378">Hydrolase</keyword>
<keyword id="KW-0540">Nuclease</keyword>
<keyword id="KW-0694">RNA-binding</keyword>
<keyword id="KW-0699">rRNA-binding</keyword>
<gene>
    <name evidence="1" type="primary">smrB</name>
    <name type="ordered locus">SPA0478</name>
</gene>
<dbReference type="EC" id="3.1.-.-" evidence="1"/>
<dbReference type="EMBL" id="CP000026">
    <property type="protein sequence ID" value="AAV76480.1"/>
    <property type="molecule type" value="Genomic_DNA"/>
</dbReference>
<dbReference type="RefSeq" id="WP_000730796.1">
    <property type="nucleotide sequence ID" value="NC_006511.1"/>
</dbReference>
<dbReference type="SMR" id="Q5PCX4"/>
<dbReference type="KEGG" id="spt:SPA0478"/>
<dbReference type="HOGENOM" id="CLU_055978_4_0_6"/>
<dbReference type="Proteomes" id="UP000008185">
    <property type="component" value="Chromosome"/>
</dbReference>
<dbReference type="GO" id="GO:0004521">
    <property type="term" value="F:RNA endonuclease activity"/>
    <property type="evidence" value="ECO:0007669"/>
    <property type="project" value="UniProtKB-UniRule"/>
</dbReference>
<dbReference type="GO" id="GO:0019843">
    <property type="term" value="F:rRNA binding"/>
    <property type="evidence" value="ECO:0007669"/>
    <property type="project" value="UniProtKB-UniRule"/>
</dbReference>
<dbReference type="GO" id="GO:0072344">
    <property type="term" value="P:rescue of stalled ribosome"/>
    <property type="evidence" value="ECO:0007669"/>
    <property type="project" value="UniProtKB-UniRule"/>
</dbReference>
<dbReference type="Gene3D" id="3.30.1370.110">
    <property type="match status" value="1"/>
</dbReference>
<dbReference type="HAMAP" id="MF_01042">
    <property type="entry name" value="SmrB"/>
    <property type="match status" value="1"/>
</dbReference>
<dbReference type="InterPro" id="IPR002625">
    <property type="entry name" value="Smr_dom"/>
</dbReference>
<dbReference type="InterPro" id="IPR036063">
    <property type="entry name" value="Smr_dom_sf"/>
</dbReference>
<dbReference type="InterPro" id="IPR022990">
    <property type="entry name" value="SmrB-like"/>
</dbReference>
<dbReference type="NCBIfam" id="NF003432">
    <property type="entry name" value="PRK04946.1"/>
    <property type="match status" value="1"/>
</dbReference>
<dbReference type="PANTHER" id="PTHR35562">
    <property type="entry name" value="DNA ENDONUCLEASE SMRA-RELATED"/>
    <property type="match status" value="1"/>
</dbReference>
<dbReference type="PANTHER" id="PTHR35562:SF1">
    <property type="entry name" value="UPF0115 PROTEIN YFCN"/>
    <property type="match status" value="1"/>
</dbReference>
<dbReference type="Pfam" id="PF01713">
    <property type="entry name" value="Smr"/>
    <property type="match status" value="1"/>
</dbReference>
<dbReference type="SMART" id="SM00463">
    <property type="entry name" value="SMR"/>
    <property type="match status" value="1"/>
</dbReference>
<dbReference type="SUPFAM" id="SSF160443">
    <property type="entry name" value="SMR domain-like"/>
    <property type="match status" value="1"/>
</dbReference>
<dbReference type="PROSITE" id="PS50828">
    <property type="entry name" value="SMR"/>
    <property type="match status" value="1"/>
</dbReference>
<comment type="function">
    <text evidence="1">Acts as a ribosome collision sensor. Detects stalled/collided disomes (pairs of ribosomes where the leading ribosome is stalled and a second ribosome has collided with it) and endonucleolytically cleaves mRNA at the 5' boundary of the stalled ribosome. Stalled/collided disomes form a new interface (primarily via the 30S subunits) that binds SmrB. Cleaved mRNA becomes available for tmRNA ligation, leading to ribosomal subunit dissociation and rescue of stalled ribosomes.</text>
</comment>
<comment type="subunit">
    <text evidence="1">Associates with collided ribosomes, but not with correctly translating polysomes.</text>
</comment>
<comment type="similarity">
    <text evidence="1">Belongs to the SmrB family.</text>
</comment>
<evidence type="ECO:0000255" key="1">
    <source>
        <dbReference type="HAMAP-Rule" id="MF_01042"/>
    </source>
</evidence>
<reference key="1">
    <citation type="journal article" date="2004" name="Nat. Genet.">
        <title>Comparison of genome degradation in Paratyphi A and Typhi, human-restricted serovars of Salmonella enterica that cause typhoid.</title>
        <authorList>
            <person name="McClelland M."/>
            <person name="Sanderson K.E."/>
            <person name="Clifton S.W."/>
            <person name="Latreille P."/>
            <person name="Porwollik S."/>
            <person name="Sabo A."/>
            <person name="Meyer R."/>
            <person name="Bieri T."/>
            <person name="Ozersky P."/>
            <person name="McLellan M."/>
            <person name="Harkins C.R."/>
            <person name="Wang C."/>
            <person name="Nguyen C."/>
            <person name="Berghoff A."/>
            <person name="Elliott G."/>
            <person name="Kohlberg S."/>
            <person name="Strong C."/>
            <person name="Du F."/>
            <person name="Carter J."/>
            <person name="Kremizki C."/>
            <person name="Layman D."/>
            <person name="Leonard S."/>
            <person name="Sun H."/>
            <person name="Fulton L."/>
            <person name="Nash W."/>
            <person name="Miner T."/>
            <person name="Minx P."/>
            <person name="Delehaunty K."/>
            <person name="Fronick C."/>
            <person name="Magrini V."/>
            <person name="Nhan M."/>
            <person name="Warren W."/>
            <person name="Florea L."/>
            <person name="Spieth J."/>
            <person name="Wilson R.K."/>
        </authorList>
    </citation>
    <scope>NUCLEOTIDE SEQUENCE [LARGE SCALE GENOMIC DNA]</scope>
    <source>
        <strain>ATCC 9150 / SARB42</strain>
    </source>
</reference>
<name>SMRB_SALPA</name>
<accession>Q5PCX4</accession>
<feature type="chain" id="PRO_1000084355" description="Ribosome rescue factor SmrB">
    <location>
        <begin position="1"/>
        <end position="183"/>
    </location>
</feature>
<feature type="domain" description="Smr" evidence="1">
    <location>
        <begin position="98"/>
        <end position="173"/>
    </location>
</feature>
<proteinExistence type="inferred from homology"/>
<sequence>MKKKTSLSEEDQALFRQLMVGTRQIKQDTIVHRPLRKKITEVPTRRLIQEQADASHYFSDEFQPLLNTEGPVKYVREDVSHFELKKMRRGDYSPELFLDLHGLTQLQAKQELGALIAACRREHIFCACVMHGHGKHILKQQTPLWLAQHPHVMAFHQAPKEYGGDAALLVLIEVEEWQPPELP</sequence>
<organism>
    <name type="scientific">Salmonella paratyphi A (strain ATCC 9150 / SARB42)</name>
    <dbReference type="NCBI Taxonomy" id="295319"/>
    <lineage>
        <taxon>Bacteria</taxon>
        <taxon>Pseudomonadati</taxon>
        <taxon>Pseudomonadota</taxon>
        <taxon>Gammaproteobacteria</taxon>
        <taxon>Enterobacterales</taxon>
        <taxon>Enterobacteriaceae</taxon>
        <taxon>Salmonella</taxon>
    </lineage>
</organism>